<sequence length="14" mass="1633">INWLKLGKKMMSAL</sequence>
<organism>
    <name type="scientific">Mischocyttarus phthisicus</name>
    <name type="common">Paper wasp</name>
    <name type="synonym">Vespa phthisica</name>
    <dbReference type="NCBI Taxonomy" id="256666"/>
    <lineage>
        <taxon>Eukaryota</taxon>
        <taxon>Metazoa</taxon>
        <taxon>Ecdysozoa</taxon>
        <taxon>Arthropoda</taxon>
        <taxon>Hexapoda</taxon>
        <taxon>Insecta</taxon>
        <taxon>Pterygota</taxon>
        <taxon>Neoptera</taxon>
        <taxon>Endopterygota</taxon>
        <taxon>Hymenoptera</taxon>
        <taxon>Apocrita</taxon>
        <taxon>Aculeata</taxon>
        <taxon>Vespoidea</taxon>
        <taxon>Vespidae</taxon>
        <taxon>Polistinae</taxon>
        <taxon>Mischocyttarini</taxon>
        <taxon>Mischocyttarus</taxon>
    </lineage>
</organism>
<accession>P0DRA7</accession>
<reference key="1">
    <citation type="journal article" date="2008" name="Peptides">
        <title>New potent antimicrobial peptides from the venom of Polistinae wasps and their analogs.</title>
        <authorList>
            <person name="Cerovsky V."/>
            <person name="Slaninova J."/>
            <person name="Fucik V."/>
            <person name="Hulacova H."/>
            <person name="Borovickova L."/>
            <person name="Jezek R."/>
            <person name="Bednarova L."/>
        </authorList>
    </citation>
    <scope>PROTEIN SEQUENCE</scope>
    <scope>AMIDATION AT LEU-14</scope>
    <scope>SUBCELLULAR LOCATION</scope>
    <scope>SYNTHESIS</scope>
    <scope>FUNCTION</scope>
    <source>
        <tissue>Venom</tissue>
    </source>
</reference>
<dbReference type="GO" id="GO:0005576">
    <property type="term" value="C:extracellular region"/>
    <property type="evidence" value="ECO:0007669"/>
    <property type="project" value="UniProtKB-SubCell"/>
</dbReference>
<dbReference type="GO" id="GO:0016020">
    <property type="term" value="C:membrane"/>
    <property type="evidence" value="ECO:0007669"/>
    <property type="project" value="UniProtKB-KW"/>
</dbReference>
<dbReference type="GO" id="GO:0044218">
    <property type="term" value="C:other organism cell membrane"/>
    <property type="evidence" value="ECO:0007669"/>
    <property type="project" value="UniProtKB-KW"/>
</dbReference>
<dbReference type="GO" id="GO:0090729">
    <property type="term" value="F:toxin activity"/>
    <property type="evidence" value="ECO:0007669"/>
    <property type="project" value="UniProtKB-KW"/>
</dbReference>
<dbReference type="InterPro" id="IPR013214">
    <property type="entry name" value="Mastoparan_peptide"/>
</dbReference>
<dbReference type="Pfam" id="PF08251">
    <property type="entry name" value="Mastoparan_2"/>
    <property type="match status" value="1"/>
</dbReference>
<proteinExistence type="evidence at protein level"/>
<evidence type="ECO:0000250" key="1">
    <source>
        <dbReference type="UniProtKB" id="P01514"/>
    </source>
</evidence>
<evidence type="ECO:0000250" key="2">
    <source>
        <dbReference type="UniProtKB" id="P84914"/>
    </source>
</evidence>
<evidence type="ECO:0000269" key="3">
    <source>
    </source>
</evidence>
<evidence type="ECO:0000303" key="4">
    <source>
    </source>
</evidence>
<evidence type="ECO:0000305" key="5"/>
<evidence type="ECO:0000305" key="6">
    <source>
    </source>
</evidence>
<feature type="peptide" id="PRO_0000458810" description="Mastoparan MP" evidence="3">
    <location>
        <begin position="1"/>
        <end position="14"/>
    </location>
</feature>
<feature type="modified residue" description="Leucine amide" evidence="3">
    <location>
        <position position="14"/>
    </location>
</feature>
<protein>
    <recommendedName>
        <fullName evidence="4">Mastoparan MP</fullName>
    </recommendedName>
</protein>
<name>MAST_MISPH</name>
<keyword id="KW-0027">Amidation</keyword>
<keyword id="KW-0903">Direct protein sequencing</keyword>
<keyword id="KW-1213">G-protein coupled receptor impairing toxin</keyword>
<keyword id="KW-0467">Mast cell degranulation</keyword>
<keyword id="KW-0472">Membrane</keyword>
<keyword id="KW-0964">Secreted</keyword>
<keyword id="KW-1052">Target cell membrane</keyword>
<keyword id="KW-1053">Target membrane</keyword>
<keyword id="KW-0800">Toxin</keyword>
<comment type="function">
    <text evidence="1 2 3">Antimicrobial peptide. Has activity against both Gram-positive and -negative bacteria (B.subtilis (MIC=9 uM), E.coli (MIC=65 uM)). Shows mast cell degranulation activity (EC(50)=15-26 uM). Has low hemolytic activity (IC(50)=100 uM) (PubMed:18375018). Its mast cell degranulation activity may be related to the activation of G-protein coupled receptors in mast cells as well as interaction with other proteins located in cell endosomal membranes in the mast cells (By similarity).</text>
</comment>
<comment type="subcellular location">
    <subcellularLocation>
        <location evidence="3">Secreted</location>
    </subcellularLocation>
    <subcellularLocation>
        <location evidence="5">Target cell membrane</location>
    </subcellularLocation>
    <text evidence="6">Assumes an amphipathic alpha-helical conformation in a membrane-like environment.</text>
</comment>
<comment type="tissue specificity">
    <text evidence="6">Expressed by the venom gland.</text>
</comment>
<comment type="PTM">
    <text evidence="3">C-terminal amidation is important for activity, since the deamidated MP-9 analog shows an important decrease in both antimicrobial and hemolytic activities.</text>
</comment>
<comment type="miscellaneous">
    <text evidence="3">Most of synthetic analogs show a decreased antimicrobial and hemolytic activity.</text>
</comment>
<comment type="similarity">
    <text evidence="5">Belongs to the MCD family. Mastoparan subfamily.</text>
</comment>